<reference key="1">
    <citation type="journal article" date="2001" name="Nature">
        <title>Complete genome sequence of a multiple drug resistant Salmonella enterica serovar Typhi CT18.</title>
        <authorList>
            <person name="Parkhill J."/>
            <person name="Dougan G."/>
            <person name="James K.D."/>
            <person name="Thomson N.R."/>
            <person name="Pickard D."/>
            <person name="Wain J."/>
            <person name="Churcher C.M."/>
            <person name="Mungall K.L."/>
            <person name="Bentley S.D."/>
            <person name="Holden M.T.G."/>
            <person name="Sebaihia M."/>
            <person name="Baker S."/>
            <person name="Basham D."/>
            <person name="Brooks K."/>
            <person name="Chillingworth T."/>
            <person name="Connerton P."/>
            <person name="Cronin A."/>
            <person name="Davis P."/>
            <person name="Davies R.M."/>
            <person name="Dowd L."/>
            <person name="White N."/>
            <person name="Farrar J."/>
            <person name="Feltwell T."/>
            <person name="Hamlin N."/>
            <person name="Haque A."/>
            <person name="Hien T.T."/>
            <person name="Holroyd S."/>
            <person name="Jagels K."/>
            <person name="Krogh A."/>
            <person name="Larsen T.S."/>
            <person name="Leather S."/>
            <person name="Moule S."/>
            <person name="O'Gaora P."/>
            <person name="Parry C."/>
            <person name="Quail M.A."/>
            <person name="Rutherford K.M."/>
            <person name="Simmonds M."/>
            <person name="Skelton J."/>
            <person name="Stevens K."/>
            <person name="Whitehead S."/>
            <person name="Barrell B.G."/>
        </authorList>
    </citation>
    <scope>NUCLEOTIDE SEQUENCE [LARGE SCALE GENOMIC DNA]</scope>
    <source>
        <strain>CT18</strain>
    </source>
</reference>
<reference key="2">
    <citation type="journal article" date="2003" name="J. Bacteriol.">
        <title>Comparative genomics of Salmonella enterica serovar Typhi strains Ty2 and CT18.</title>
        <authorList>
            <person name="Deng W."/>
            <person name="Liou S.-R."/>
            <person name="Plunkett G. III"/>
            <person name="Mayhew G.F."/>
            <person name="Rose D.J."/>
            <person name="Burland V."/>
            <person name="Kodoyianni V."/>
            <person name="Schwartz D.C."/>
            <person name="Blattner F.R."/>
        </authorList>
    </citation>
    <scope>NUCLEOTIDE SEQUENCE [LARGE SCALE GENOMIC DNA]</scope>
    <source>
        <strain>ATCC 700931 / Ty2</strain>
    </source>
</reference>
<accession>Q8XEK3</accession>
<accession>Q7AM49</accession>
<keyword id="KW-1003">Cell membrane</keyword>
<keyword id="KW-0472">Membrane</keyword>
<keyword id="KW-0812">Transmembrane</keyword>
<keyword id="KW-1133">Transmembrane helix</keyword>
<feature type="chain" id="PRO_0000215053" description="Protein AaeX">
    <location>
        <begin position="1"/>
        <end position="67"/>
    </location>
</feature>
<feature type="transmembrane region" description="Helical" evidence="1">
    <location>
        <begin position="3"/>
        <end position="23"/>
    </location>
</feature>
<feature type="transmembrane region" description="Helical" evidence="1">
    <location>
        <begin position="43"/>
        <end position="63"/>
    </location>
</feature>
<organism>
    <name type="scientific">Salmonella typhi</name>
    <dbReference type="NCBI Taxonomy" id="90370"/>
    <lineage>
        <taxon>Bacteria</taxon>
        <taxon>Pseudomonadati</taxon>
        <taxon>Pseudomonadota</taxon>
        <taxon>Gammaproteobacteria</taxon>
        <taxon>Enterobacterales</taxon>
        <taxon>Enterobacteriaceae</taxon>
        <taxon>Salmonella</taxon>
    </lineage>
</organism>
<proteinExistence type="inferred from homology"/>
<protein>
    <recommendedName>
        <fullName evidence="1">Protein AaeX</fullName>
    </recommendedName>
</protein>
<evidence type="ECO:0000255" key="1">
    <source>
        <dbReference type="HAMAP-Rule" id="MF_01546"/>
    </source>
</evidence>
<name>AAEX_SALTI</name>
<dbReference type="EMBL" id="AL513382">
    <property type="protein sequence ID" value="CAD07881.1"/>
    <property type="molecule type" value="Genomic_DNA"/>
</dbReference>
<dbReference type="EMBL" id="AE014613">
    <property type="protein sequence ID" value="AAO70816.1"/>
    <property type="molecule type" value="Genomic_DNA"/>
</dbReference>
<dbReference type="RefSeq" id="NP_457742.1">
    <property type="nucleotide sequence ID" value="NC_003198.1"/>
</dbReference>
<dbReference type="RefSeq" id="WP_000051840.1">
    <property type="nucleotide sequence ID" value="NZ_WSUR01000038.1"/>
</dbReference>
<dbReference type="SMR" id="Q8XEK3"/>
<dbReference type="STRING" id="220341.gene:17587394"/>
<dbReference type="GeneID" id="45138179"/>
<dbReference type="KEGG" id="stt:t3281"/>
<dbReference type="KEGG" id="sty:STY3546a"/>
<dbReference type="PATRIC" id="fig|220341.7.peg.3610"/>
<dbReference type="eggNOG" id="ENOG5032YJX">
    <property type="taxonomic scope" value="Bacteria"/>
</dbReference>
<dbReference type="HOGENOM" id="CLU_188292_0_0_6"/>
<dbReference type="OMA" id="IYDLVWH"/>
<dbReference type="OrthoDB" id="6080293at2"/>
<dbReference type="Proteomes" id="UP000000541">
    <property type="component" value="Chromosome"/>
</dbReference>
<dbReference type="Proteomes" id="UP000002670">
    <property type="component" value="Chromosome"/>
</dbReference>
<dbReference type="GO" id="GO:0005886">
    <property type="term" value="C:plasma membrane"/>
    <property type="evidence" value="ECO:0007669"/>
    <property type="project" value="UniProtKB-SubCell"/>
</dbReference>
<dbReference type="HAMAP" id="MF_01546">
    <property type="entry name" value="AaeX"/>
    <property type="match status" value="1"/>
</dbReference>
<dbReference type="InterPro" id="IPR012451">
    <property type="entry name" value="DUF1656"/>
</dbReference>
<dbReference type="NCBIfam" id="NF008615">
    <property type="entry name" value="PRK11594.1"/>
    <property type="match status" value="1"/>
</dbReference>
<dbReference type="Pfam" id="PF07869">
    <property type="entry name" value="DUF1656"/>
    <property type="match status" value="1"/>
</dbReference>
<sequence length="67" mass="7879">MSLFPVIVVFGLSFPPIFFELLLSLAIFWLVRRMLVPTGIYDFVWHPALFNTALYCCLFYLISRLFV</sequence>
<gene>
    <name evidence="1" type="primary">aaeX</name>
    <name type="ordered locus">STY3546.1</name>
    <name type="ordered locus">t3281</name>
    <name type="ORF">STY3546a</name>
</gene>
<comment type="subcellular location">
    <subcellularLocation>
        <location evidence="1">Cell membrane</location>
        <topology evidence="1">Multi-pass membrane protein</topology>
    </subcellularLocation>
</comment>
<comment type="similarity">
    <text evidence="1">Belongs to the AaeX family.</text>
</comment>